<sequence>MASDKPGPGLEPQPVALLAVGAGGGAGGGGAMGEPRGAAGSGPVVLPAGMINPSVPIRNIRMKFAVLIGLIQVGEVSNRDIVETVLNLLVGGEFDLEMNFIIQDAESITCMTELLEHCDVTCQAEIWSMFTAILRKSVRNLQTSTEVGLIEQVLLKMSAVDDMIADLLVDMLGVLASYSITVKELKLLFSMLRGESGIWPRHAVKLLSVLNQMPQRHGPDTFFNFPGCSAAAIALPPIAKWPYQNGFTLNTWFRMDPLNNINVDKDKPYLYCFRTSKGVGYSAHFVGNCLIVTSLKSKGKGFQHCVKYDFQPRKWYMISIVHIYNRWRNSEIRCYVNGQLVSYGDMAWHVNTNDSYDKCFLGSSETADANRVFCGQLGAVYVFSEALNPAQIFAVHQLGPGYKSTFKFKSESDIHLAEHHKQVLYDGKLASSIAFSYNAKATDAQLCLESSPKENASIFVHSPHALMLQDVKAIVTHSIHSAIHSIGGIQVLFPLFAQLDNRQLNDSQVETTVCATLLAFLVELLKSSVAMQEQMLGGKGFLVIGYLLEKSSRVHITRAVLEQFLSFAKYLDGLSHGAPLLKQLCDHILFNPAIWIHTPAKVQLSLYTYLSAEFIGTATIYTTIRRVGTVLQLMHTLKYYYWVINPADSSGIAPKGLDGPRPSQKEIISLRAFMLLFLKQLILKDRGVKEDELQSILNYLLTMHEDENIHDVLQLLVALMSEHPASMIPAFDQRNGIRVIYKLLASKSESIWVQALKVLGYFLKHLGHKRKVEIMHTHSLFTLLGERLMLHTNTVTVTTYNTLYEILTEQVCTQVVHKPHPEPDSTVKIQNPMILKVVATLLKNSTPSAELMEVRRLFLSDMIKLFSNSRENRRCLLQCSVWQDWMFSLGYINPKSSEEQKITEMVYNIFRILLYHAIKYEWGGWRVWVDTLSIAHSKVTYEAHKEYLAKMYEEYQRQEEENIKKGKKGNVSTISGLSSQTAGAKGGMEIREIEDLSQSQSPESETDYPVSTDTRDLLMSTKVSDDILGSSDRPGSGVHVEVHDLLVDIKAEKVEATEVKLDDMDLSPETLVGGENGALVEVESLLDNVYSAAVEKLQNNVHGSVGIIKKNEEKDNGPLITLADEKEELPNSSTPFLFDKIPRQEEKLLPELSSNHIIPNIQDTQVHLGVSDDLGLLAHMTASVELTCTSSIMEEKDFRIHTTSDGVSSVSERELASSTKGLDYAEMTATTLETESSNSKAVPNVDAGSIISDTERSDDGKESGKEIRKIQTTATTQAVQGRSSTQQDRDLRVDLGFRGMPMTEEQRRQFSPGPRTTMFRIPEFKWSPMHQRLLTDLLFALETDVHVWRSHSTKSVMDFVNSNENIIFVHNTIHLISQMVDNIIIACGGILPLLSAATSPTGSKTELENIEVTQGMSAETAVTFLSRLMAMVDVLVFASSLNFSEIEAEKNMSSGGLMRQCLRLVCCVAVRNCLECRQRQRDRGSKSSHGSSKPQEAPHSVTAASASKTPLENVPGNLSPIKDPDRLLQDVDINRLRAVVFRDVDDSKQAQFLALAVVYFISVLMVSKYRDILEPQRETARTGSQPGRNIRQEINSPTSTVVVIPSIPHPSLNHGLLAKLMPEQSFAHSFYKETPATFPDTVKEKETPTPGEDIQLESSVPHTDSGMGEEQVASILDGAELEPAAGPDAMSELLSTLSSEVKKSQESLTEHPSEMLKPAPSISSISQTKGINVKEILKSLVAAPVEIAECGPEPIPYPDPALKREAHAILPMQFHSFDRSVVVPVKKPPPGSLAVTTVGATAAGSGLPTGSTSSIFAAPGATPKSMINTTGAVDSGSSSSSSSSSFVNGATSKNLPAVQTVAPMPEDSAENMSITAKLERALEKVAPLLREIFVDFAPFLSRTLLGSHGQELLIEGLVCMKSSTSVVELVMLLCSQEWQNSIQKNAGLAFIELINEGRLLCHAMKDHIVRVANEAEFILNRQRAEDVHKHAEFESQCAQYAADRREEEKMCDHLISAAKHRDHVTANQLKQKILNILTNKHGAWGAVSHSQLHDFWRLDYWEDDLRRRRRFVRNAFGSTHAEALLKSAVEYGTEEDVVKSKKAFRSQAIVNQNSETELMLEGDDDAVSLLQEKEIDNLAGPVVLSTPAQLIAPVVVAKGTLSITTTEIYFEVDEDDAAFKKIDTKVLAYTEGLHGKWMFSEIRAVFSRRYLLQNTALEVFMANRTSVMFNFPDQATVKKVVYSLPRVGVGTSYGLPQARRISLATPRQLYKSSNMTQRWQRREISNFEYLMFLNTIAGRTYNDLNQYPVFPWVLTNYESEELDLTLPGNFRDLSKPIGALNPKRAVFYAERYETWEEDQSPPFHYNTHYSTATSALSWLVRIEPFTTFFLNANDGKFDHPDRTFSSIARSWRTSQRDTSDVKELIPEFYYLPEMFVNSNGYHLGVREDEVVVNDVDLPPWAKKPEDFVRINRMALESEFVSCQLHQWIDLIFGYKQRGPEAVRALNVFHYLTYEGSVNLDSITDPVLREAMEAQIQNFGQTPSQLLIEPHPPRSSAMHLCFLPQSPLMFKDQMQQDVIMVLKFPSNSPVTHVAANTLPHLTIPAVVTVTCSRLFAVNRWHNTVGLRGAPGYSLDQAHHLPIEMDPLIANNSGVNKRQITDLVDQSIQINAHCFVVTADNRYILICGFWDKSFRVYSTETGKLTQIVFGHWDVVTCLARSESYIGGDCYIVSGSRDATLLLWYWSGRHHIIGDNPNSSDYPAPRAVLTGHDHEVVCVSVCAELGLVISGAKEGPCLVHTITGDLLRALEGPENCLFPRLISVSSEGHCIIYYERGRFSNFSINGKLLAQMEINDSTRAILLSSDGQNLVTGGDNGVVEVWQACDFKQLYIYPGCDAGIRAMDLSHDQRTLITGMASGSIVAFNIDFNRWHYEHQNRY</sequence>
<keyword id="KW-0025">Alternative splicing</keyword>
<keyword id="KW-1003">Cell membrane</keyword>
<keyword id="KW-0472">Membrane</keyword>
<keyword id="KW-0597">Phosphoprotein</keyword>
<keyword id="KW-0628">Postsynaptic cell membrane</keyword>
<keyword id="KW-1185">Reference proteome</keyword>
<keyword id="KW-0677">Repeat</keyword>
<keyword id="KW-0770">Synapse</keyword>
<keyword id="KW-0853">WD repeat</keyword>
<comment type="function">
    <text evidence="4 6">Binds to type II regulatory subunits of protein kinase A and anchors/targets them to the membrane. May anchor the kinase to cytoskeletal and/or organelle-associated proteins. May have a role in membrane trafficking.</text>
</comment>
<comment type="subunit">
    <text evidence="4">Interacts with RII subunit of PKA.</text>
</comment>
<comment type="subcellular location">
    <subcellularLocation>
        <location evidence="4">Membrane</location>
        <topology evidence="4">Peripheral membrane protein</topology>
    </subcellularLocation>
    <subcellularLocation>
        <location evidence="4">Endomembrane system</location>
        <topology evidence="4">Peripheral membrane protein</topology>
    </subcellularLocation>
    <subcellularLocation>
        <location evidence="4">Postsynaptic cell membrane</location>
        <topology evidence="4">Peripheral membrane protein</topology>
    </subcellularLocation>
    <text>Associated with pleomorphic tubulovesicular endomembranes near the trans sides of Golgi stacks and throughout the cell bodies and cell processes. Concentrated at the postsynaptic plasma membrane of a subpopulation of synapses.</text>
</comment>
<comment type="alternative products">
    <event type="alternative splicing"/>
    <isoform>
        <id>Q9EPN1-1</id>
        <name evidence="4">1</name>
        <sequence type="displayed"/>
    </isoform>
    <isoform>
        <id>Q9EPN1-2</id>
        <name evidence="8">2</name>
        <sequence type="described" ref="VSP_050540"/>
    </isoform>
    <isoform>
        <id>Q9EPN1-3</id>
        <name evidence="4">3</name>
        <sequence type="described" ref="VSP_050541"/>
    </isoform>
    <isoform>
        <id>Q9EPN1-4</id>
        <name evidence="4">4</name>
        <sequence type="described" ref="VSP_050542"/>
    </isoform>
</comment>
<comment type="tissue specificity">
    <text evidence="4">Forebrain, brainstem and cerebellum.</text>
</comment>
<comment type="developmental stage">
    <text evidence="4">Highly expressed in neonatal brain, levels decline in adults.</text>
</comment>
<comment type="domain">
    <text evidence="6">RII-alpha binding site, predicted to form an amphipathic helix, could participate in protein-protein interactions with a complementary surface on the R-subunit dimer.</text>
</comment>
<comment type="similarity">
    <text evidence="8">Belongs to the WD repeat neurobeachin family.</text>
</comment>
<dbReference type="EMBL" id="Y18276">
    <property type="protein sequence ID" value="CAC18811.1"/>
    <property type="molecule type" value="mRNA"/>
</dbReference>
<dbReference type="EMBL" id="Y18276">
    <property type="protein sequence ID" value="CAC18812.1"/>
    <property type="molecule type" value="mRNA"/>
</dbReference>
<dbReference type="EMBL" id="Y18276">
    <property type="protein sequence ID" value="CAC18813.1"/>
    <property type="molecule type" value="mRNA"/>
</dbReference>
<dbReference type="EMBL" id="AK043125">
    <property type="protein sequence ID" value="BAC31466.1"/>
    <property type="molecule type" value="mRNA"/>
</dbReference>
<dbReference type="EMBL" id="AF072372">
    <property type="protein sequence ID" value="AAD41634.1"/>
    <property type="molecule type" value="mRNA"/>
</dbReference>
<dbReference type="CCDS" id="CCDS50911.1">
    <molecule id="Q9EPN1-1"/>
</dbReference>
<dbReference type="RefSeq" id="NP_085098.1">
    <molecule id="Q9EPN1-1"/>
    <property type="nucleotide sequence ID" value="NM_030595.1"/>
</dbReference>
<dbReference type="RefSeq" id="XP_006501586.1">
    <molecule id="Q9EPN1-4"/>
    <property type="nucleotide sequence ID" value="XM_006501523.4"/>
</dbReference>
<dbReference type="RefSeq" id="XP_030108486.1">
    <molecule id="Q9EPN1-2"/>
    <property type="nucleotide sequence ID" value="XM_030252626.1"/>
</dbReference>
<dbReference type="SMR" id="Q9EPN1"/>
<dbReference type="BioGRID" id="204974">
    <property type="interactions" value="11"/>
</dbReference>
<dbReference type="FunCoup" id="Q9EPN1">
    <property type="interactions" value="2112"/>
</dbReference>
<dbReference type="IntAct" id="Q9EPN1">
    <property type="interactions" value="10"/>
</dbReference>
<dbReference type="MINT" id="Q9EPN1"/>
<dbReference type="STRING" id="10090.ENSMUSP00000029374"/>
<dbReference type="GlyGen" id="Q9EPN1">
    <property type="glycosylation" value="15 sites, 5 N-linked glycans (5 sites), 1 O-linked glycan (9 sites)"/>
</dbReference>
<dbReference type="iPTMnet" id="Q9EPN1"/>
<dbReference type="PhosphoSitePlus" id="Q9EPN1"/>
<dbReference type="SwissPalm" id="Q9EPN1"/>
<dbReference type="PaxDb" id="10090-ENSMUSP00000029374"/>
<dbReference type="PeptideAtlas" id="Q9EPN1"/>
<dbReference type="ProteomicsDB" id="287614">
    <molecule id="Q9EPN1-1"/>
</dbReference>
<dbReference type="ProteomicsDB" id="287615">
    <molecule id="Q9EPN1-2"/>
</dbReference>
<dbReference type="ProteomicsDB" id="287616">
    <molecule id="Q9EPN1-3"/>
</dbReference>
<dbReference type="ProteomicsDB" id="287617">
    <molecule id="Q9EPN1-4"/>
</dbReference>
<dbReference type="Pumba" id="Q9EPN1"/>
<dbReference type="Antibodypedia" id="22966">
    <property type="antibodies" value="74 antibodies from 26 providers"/>
</dbReference>
<dbReference type="Ensembl" id="ENSMUST00000029374.8">
    <molecule id="Q9EPN1-1"/>
    <property type="protein sequence ID" value="ENSMUSP00000029374.7"/>
    <property type="gene ID" value="ENSMUSG00000027799.13"/>
</dbReference>
<dbReference type="GeneID" id="26422"/>
<dbReference type="KEGG" id="mmu:26422"/>
<dbReference type="UCSC" id="uc008pgt.2">
    <molecule id="Q9EPN1-2"/>
    <property type="organism name" value="mouse"/>
</dbReference>
<dbReference type="UCSC" id="uc033htk.1">
    <molecule id="Q9EPN1-1"/>
    <property type="organism name" value="mouse"/>
</dbReference>
<dbReference type="AGR" id="MGI:1347075"/>
<dbReference type="CTD" id="26960"/>
<dbReference type="MGI" id="MGI:1347075">
    <property type="gene designation" value="Nbea"/>
</dbReference>
<dbReference type="VEuPathDB" id="HostDB:ENSMUSG00000027799"/>
<dbReference type="eggNOG" id="KOG1787">
    <property type="taxonomic scope" value="Eukaryota"/>
</dbReference>
<dbReference type="GeneTree" id="ENSGT00940000154934"/>
<dbReference type="HOGENOM" id="CLU_000218_2_1_1"/>
<dbReference type="InParanoid" id="Q9EPN1"/>
<dbReference type="OMA" id="XRKVEIM"/>
<dbReference type="OrthoDB" id="26681at2759"/>
<dbReference type="PhylomeDB" id="Q9EPN1"/>
<dbReference type="TreeFam" id="TF313490"/>
<dbReference type="BioGRID-ORCS" id="26422">
    <property type="hits" value="0 hits in 77 CRISPR screens"/>
</dbReference>
<dbReference type="CD-CODE" id="CE726F99">
    <property type="entry name" value="Postsynaptic density"/>
</dbReference>
<dbReference type="ChiTaRS" id="Nbea">
    <property type="organism name" value="mouse"/>
</dbReference>
<dbReference type="PRO" id="PR:Q9EPN1"/>
<dbReference type="Proteomes" id="UP000000589">
    <property type="component" value="Chromosome 3"/>
</dbReference>
<dbReference type="RNAct" id="Q9EPN1">
    <property type="molecule type" value="protein"/>
</dbReference>
<dbReference type="Bgee" id="ENSMUSG00000027799">
    <property type="expression patterns" value="Expressed in caudate-putamen and 241 other cell types or tissues"/>
</dbReference>
<dbReference type="ExpressionAtlas" id="Q9EPN1">
    <property type="expression patterns" value="baseline and differential"/>
</dbReference>
<dbReference type="GO" id="GO:0099192">
    <property type="term" value="C:cerebellar Golgi cell to granule cell synapse"/>
    <property type="evidence" value="ECO:0007669"/>
    <property type="project" value="Ensembl"/>
</dbReference>
<dbReference type="GO" id="GO:0005829">
    <property type="term" value="C:cytosol"/>
    <property type="evidence" value="ECO:0000314"/>
    <property type="project" value="UniProtKB"/>
</dbReference>
<dbReference type="GO" id="GO:0012505">
    <property type="term" value="C:endomembrane system"/>
    <property type="evidence" value="ECO:0000314"/>
    <property type="project" value="UniProtKB"/>
</dbReference>
<dbReference type="GO" id="GO:0098890">
    <property type="term" value="C:extrinsic component of postsynaptic membrane"/>
    <property type="evidence" value="ECO:0007669"/>
    <property type="project" value="Ensembl"/>
</dbReference>
<dbReference type="GO" id="GO:0098982">
    <property type="term" value="C:GABA-ergic synapse"/>
    <property type="evidence" value="ECO:0007669"/>
    <property type="project" value="Ensembl"/>
</dbReference>
<dbReference type="GO" id="GO:0098978">
    <property type="term" value="C:glutamatergic synapse"/>
    <property type="evidence" value="ECO:0000314"/>
    <property type="project" value="SynGO"/>
</dbReference>
<dbReference type="GO" id="GO:0005654">
    <property type="term" value="C:nucleoplasm"/>
    <property type="evidence" value="ECO:0000304"/>
    <property type="project" value="Reactome"/>
</dbReference>
<dbReference type="GO" id="GO:0005634">
    <property type="term" value="C:nucleus"/>
    <property type="evidence" value="ECO:0000314"/>
    <property type="project" value="CACAO"/>
</dbReference>
<dbReference type="GO" id="GO:0005886">
    <property type="term" value="C:plasma membrane"/>
    <property type="evidence" value="ECO:0000314"/>
    <property type="project" value="UniProtKB"/>
</dbReference>
<dbReference type="GO" id="GO:0045211">
    <property type="term" value="C:postsynaptic membrane"/>
    <property type="evidence" value="ECO:0000303"/>
    <property type="project" value="UniProtKB"/>
</dbReference>
<dbReference type="GO" id="GO:0005802">
    <property type="term" value="C:trans-Golgi network"/>
    <property type="evidence" value="ECO:0000314"/>
    <property type="project" value="UniProtKB"/>
</dbReference>
<dbReference type="GO" id="GO:0051018">
    <property type="term" value="F:protein kinase A binding"/>
    <property type="evidence" value="ECO:0000303"/>
    <property type="project" value="UniProtKB"/>
</dbReference>
<dbReference type="GO" id="GO:0019901">
    <property type="term" value="F:protein kinase binding"/>
    <property type="evidence" value="ECO:0000314"/>
    <property type="project" value="MGI"/>
</dbReference>
<dbReference type="GO" id="GO:0061484">
    <property type="term" value="P:hematopoietic stem cell homeostasis"/>
    <property type="evidence" value="ECO:0000315"/>
    <property type="project" value="MGI"/>
</dbReference>
<dbReference type="GO" id="GO:0006892">
    <property type="term" value="P:post-Golgi vesicle-mediated transport"/>
    <property type="evidence" value="ECO:0000303"/>
    <property type="project" value="UniProtKB"/>
</dbReference>
<dbReference type="GO" id="GO:0008104">
    <property type="term" value="P:protein localization"/>
    <property type="evidence" value="ECO:0000314"/>
    <property type="project" value="MGI"/>
</dbReference>
<dbReference type="GO" id="GO:0006605">
    <property type="term" value="P:protein targeting"/>
    <property type="evidence" value="ECO:0000250"/>
    <property type="project" value="MGI"/>
</dbReference>
<dbReference type="GO" id="GO:0098696">
    <property type="term" value="P:regulation of neurotransmitter receptor localization to postsynaptic specialization membrane"/>
    <property type="evidence" value="ECO:0000314"/>
    <property type="project" value="SynGO"/>
</dbReference>
<dbReference type="GO" id="GO:0050808">
    <property type="term" value="P:synapse organization"/>
    <property type="evidence" value="ECO:0000314"/>
    <property type="project" value="SynGO"/>
</dbReference>
<dbReference type="CDD" id="cd06071">
    <property type="entry name" value="Beach"/>
    <property type="match status" value="1"/>
</dbReference>
<dbReference type="CDD" id="cd01201">
    <property type="entry name" value="PH_BEACH"/>
    <property type="match status" value="1"/>
</dbReference>
<dbReference type="FunFam" id="2.130.10.10:FF:000036">
    <property type="entry name" value="Neurobeachin isoform A"/>
    <property type="match status" value="1"/>
</dbReference>
<dbReference type="FunFam" id="1.10.1540.10:FF:000001">
    <property type="entry name" value="neurobeachin isoform X1"/>
    <property type="match status" value="1"/>
</dbReference>
<dbReference type="FunFam" id="2.30.29.30:FF:000059">
    <property type="entry name" value="neurobeachin isoform X1"/>
    <property type="match status" value="1"/>
</dbReference>
<dbReference type="FunFam" id="2.60.120.200:FF:000010">
    <property type="entry name" value="neurobeachin isoform X2"/>
    <property type="match status" value="1"/>
</dbReference>
<dbReference type="Gene3D" id="2.60.120.200">
    <property type="match status" value="1"/>
</dbReference>
<dbReference type="Gene3D" id="1.10.1540.10">
    <property type="entry name" value="BEACH domain"/>
    <property type="match status" value="1"/>
</dbReference>
<dbReference type="Gene3D" id="2.30.29.30">
    <property type="entry name" value="Pleckstrin-homology domain (PH domain)/Phosphotyrosine-binding domain (PTB)"/>
    <property type="match status" value="1"/>
</dbReference>
<dbReference type="Gene3D" id="2.130.10.10">
    <property type="entry name" value="YVTN repeat-like/Quinoprotein amine dehydrogenase"/>
    <property type="match status" value="1"/>
</dbReference>
<dbReference type="InterPro" id="IPR016024">
    <property type="entry name" value="ARM-type_fold"/>
</dbReference>
<dbReference type="InterPro" id="IPR000409">
    <property type="entry name" value="BEACH_dom"/>
</dbReference>
<dbReference type="InterPro" id="IPR036372">
    <property type="entry name" value="BEACH_dom_sf"/>
</dbReference>
<dbReference type="InterPro" id="IPR050865">
    <property type="entry name" value="BEACH_Domain"/>
</dbReference>
<dbReference type="InterPro" id="IPR013320">
    <property type="entry name" value="ConA-like_dom_sf"/>
</dbReference>
<dbReference type="InterPro" id="IPR046851">
    <property type="entry name" value="NBCH_WD40"/>
</dbReference>
<dbReference type="InterPro" id="IPR010508">
    <property type="entry name" value="NBEA-like_DUF1088"/>
</dbReference>
<dbReference type="InterPro" id="IPR031570">
    <property type="entry name" value="NBEA/BDCP_DUF4704"/>
</dbReference>
<dbReference type="InterPro" id="IPR046852">
    <property type="entry name" value="Neurobeachin_a-sol"/>
</dbReference>
<dbReference type="InterPro" id="IPR023362">
    <property type="entry name" value="PH-BEACH_dom"/>
</dbReference>
<dbReference type="InterPro" id="IPR011993">
    <property type="entry name" value="PH-like_dom_sf"/>
</dbReference>
<dbReference type="InterPro" id="IPR015943">
    <property type="entry name" value="WD40/YVTN_repeat-like_dom_sf"/>
</dbReference>
<dbReference type="InterPro" id="IPR036322">
    <property type="entry name" value="WD40_repeat_dom_sf"/>
</dbReference>
<dbReference type="InterPro" id="IPR001680">
    <property type="entry name" value="WD40_rpt"/>
</dbReference>
<dbReference type="PANTHER" id="PTHR13743">
    <property type="entry name" value="BEIGE/BEACH-RELATED"/>
    <property type="match status" value="1"/>
</dbReference>
<dbReference type="PANTHER" id="PTHR13743:SF62">
    <property type="entry name" value="NEUROBEACHIN"/>
    <property type="match status" value="1"/>
</dbReference>
<dbReference type="Pfam" id="PF02138">
    <property type="entry name" value="Beach"/>
    <property type="match status" value="1"/>
</dbReference>
<dbReference type="Pfam" id="PF06469">
    <property type="entry name" value="DUF1088"/>
    <property type="match status" value="1"/>
</dbReference>
<dbReference type="Pfam" id="PF15787">
    <property type="entry name" value="DUF4704"/>
    <property type="match status" value="1"/>
</dbReference>
<dbReference type="Pfam" id="PF13385">
    <property type="entry name" value="Laminin_G_3"/>
    <property type="match status" value="1"/>
</dbReference>
<dbReference type="Pfam" id="PF20426">
    <property type="entry name" value="NBCH_WD40"/>
    <property type="match status" value="1"/>
</dbReference>
<dbReference type="Pfam" id="PF20425">
    <property type="entry name" value="Neurobeachin"/>
    <property type="match status" value="1"/>
</dbReference>
<dbReference type="Pfam" id="PF14844">
    <property type="entry name" value="PH_BEACH"/>
    <property type="match status" value="1"/>
</dbReference>
<dbReference type="SMART" id="SM01026">
    <property type="entry name" value="Beach"/>
    <property type="match status" value="1"/>
</dbReference>
<dbReference type="SMART" id="SM00320">
    <property type="entry name" value="WD40"/>
    <property type="match status" value="5"/>
</dbReference>
<dbReference type="SUPFAM" id="SSF48371">
    <property type="entry name" value="ARM repeat"/>
    <property type="match status" value="1"/>
</dbReference>
<dbReference type="SUPFAM" id="SSF81837">
    <property type="entry name" value="BEACH domain"/>
    <property type="match status" value="1"/>
</dbReference>
<dbReference type="SUPFAM" id="SSF49899">
    <property type="entry name" value="Concanavalin A-like lectins/glucanases"/>
    <property type="match status" value="1"/>
</dbReference>
<dbReference type="SUPFAM" id="SSF50729">
    <property type="entry name" value="PH domain-like"/>
    <property type="match status" value="1"/>
</dbReference>
<dbReference type="SUPFAM" id="SSF50978">
    <property type="entry name" value="WD40 repeat-like"/>
    <property type="match status" value="1"/>
</dbReference>
<dbReference type="PROSITE" id="PS50197">
    <property type="entry name" value="BEACH"/>
    <property type="match status" value="1"/>
</dbReference>
<dbReference type="PROSITE" id="PS51783">
    <property type="entry name" value="PH_BEACH"/>
    <property type="match status" value="1"/>
</dbReference>
<dbReference type="PROSITE" id="PS50294">
    <property type="entry name" value="WD_REPEATS_REGION"/>
    <property type="match status" value="1"/>
</dbReference>
<accession>Q9EPN1</accession>
<accession>Q8C931</accession>
<accession>Q9EPM9</accession>
<accession>Q9EPN0</accession>
<accession>Q9WVM9</accession>
<gene>
    <name type="primary">Nbea</name>
    <name type="synonym">Lyst2</name>
</gene>
<name>NBEA_MOUSE</name>
<organism evidence="9">
    <name type="scientific">Mus musculus</name>
    <name type="common">Mouse</name>
    <dbReference type="NCBI Taxonomy" id="10090"/>
    <lineage>
        <taxon>Eukaryota</taxon>
        <taxon>Metazoa</taxon>
        <taxon>Chordata</taxon>
        <taxon>Craniata</taxon>
        <taxon>Vertebrata</taxon>
        <taxon>Euteleostomi</taxon>
        <taxon>Mammalia</taxon>
        <taxon>Eutheria</taxon>
        <taxon>Euarchontoglires</taxon>
        <taxon>Glires</taxon>
        <taxon>Rodentia</taxon>
        <taxon>Myomorpha</taxon>
        <taxon>Muroidea</taxon>
        <taxon>Muridae</taxon>
        <taxon>Murinae</taxon>
        <taxon>Mus</taxon>
        <taxon>Mus</taxon>
    </lineage>
</organism>
<reference evidence="8" key="1">
    <citation type="journal article" date="2000" name="J. Neurosci.">
        <title>Neurobeachin: a protein kinase A-anchoring, beige/Chediak-Higashi protein homolog implicated in neuronal membrane traffic.</title>
        <authorList>
            <person name="Wang X."/>
            <person name="Herberg F.W."/>
            <person name="Laue M.M."/>
            <person name="Wullner C."/>
            <person name="Hu B."/>
            <person name="Petrasch-Parwez E."/>
            <person name="Kilimann M.W."/>
        </authorList>
    </citation>
    <scope>NUCLEOTIDE SEQUENCE [MRNA] (ISOFORMS 1; 3 AND 4)</scope>
    <scope>FUNCTION</scope>
    <scope>SUBCELLULAR LOCATION</scope>
    <scope>TISSUE SPECIFICITY</scope>
    <scope>DEVELOPMENTAL STAGE</scope>
    <source>
        <tissue evidence="9">Brain</tissue>
    </source>
</reference>
<reference evidence="8" key="2">
    <citation type="journal article" date="2002" name="Genomics">
        <title>BCL8 is a novel, evolutionarily conserved human gene family encoding proteins with presumptive protein kinase A anchoring function.</title>
        <authorList>
            <person name="Dyomin V.G."/>
            <person name="Chaganti S.R."/>
            <person name="Dyomina K."/>
            <person name="Palanisamy N."/>
            <person name="Murty V.V.V.S."/>
            <person name="Dalla-Favera R."/>
            <person name="Chaganti R.S.K."/>
        </authorList>
    </citation>
    <scope>NUCLEOTIDE SEQUENCE [MRNA]</scope>
    <scope>ALTERNATIVE SPLICING</scope>
    <source>
        <tissue evidence="5">Brain</tissue>
    </source>
</reference>
<reference key="3">
    <citation type="journal article" date="2005" name="Science">
        <title>The transcriptional landscape of the mammalian genome.</title>
        <authorList>
            <person name="Carninci P."/>
            <person name="Kasukawa T."/>
            <person name="Katayama S."/>
            <person name="Gough J."/>
            <person name="Frith M.C."/>
            <person name="Maeda N."/>
            <person name="Oyama R."/>
            <person name="Ravasi T."/>
            <person name="Lenhard B."/>
            <person name="Wells C."/>
            <person name="Kodzius R."/>
            <person name="Shimokawa K."/>
            <person name="Bajic V.B."/>
            <person name="Brenner S.E."/>
            <person name="Batalov S."/>
            <person name="Forrest A.R."/>
            <person name="Zavolan M."/>
            <person name="Davis M.J."/>
            <person name="Wilming L.G."/>
            <person name="Aidinis V."/>
            <person name="Allen J.E."/>
            <person name="Ambesi-Impiombato A."/>
            <person name="Apweiler R."/>
            <person name="Aturaliya R.N."/>
            <person name="Bailey T.L."/>
            <person name="Bansal M."/>
            <person name="Baxter L."/>
            <person name="Beisel K.W."/>
            <person name="Bersano T."/>
            <person name="Bono H."/>
            <person name="Chalk A.M."/>
            <person name="Chiu K.P."/>
            <person name="Choudhary V."/>
            <person name="Christoffels A."/>
            <person name="Clutterbuck D.R."/>
            <person name="Crowe M.L."/>
            <person name="Dalla E."/>
            <person name="Dalrymple B.P."/>
            <person name="de Bono B."/>
            <person name="Della Gatta G."/>
            <person name="di Bernardo D."/>
            <person name="Down T."/>
            <person name="Engstrom P."/>
            <person name="Fagiolini M."/>
            <person name="Faulkner G."/>
            <person name="Fletcher C.F."/>
            <person name="Fukushima T."/>
            <person name="Furuno M."/>
            <person name="Futaki S."/>
            <person name="Gariboldi M."/>
            <person name="Georgii-Hemming P."/>
            <person name="Gingeras T.R."/>
            <person name="Gojobori T."/>
            <person name="Green R.E."/>
            <person name="Gustincich S."/>
            <person name="Harbers M."/>
            <person name="Hayashi Y."/>
            <person name="Hensch T.K."/>
            <person name="Hirokawa N."/>
            <person name="Hill D."/>
            <person name="Huminiecki L."/>
            <person name="Iacono M."/>
            <person name="Ikeo K."/>
            <person name="Iwama A."/>
            <person name="Ishikawa T."/>
            <person name="Jakt M."/>
            <person name="Kanapin A."/>
            <person name="Katoh M."/>
            <person name="Kawasawa Y."/>
            <person name="Kelso J."/>
            <person name="Kitamura H."/>
            <person name="Kitano H."/>
            <person name="Kollias G."/>
            <person name="Krishnan S.P."/>
            <person name="Kruger A."/>
            <person name="Kummerfeld S.K."/>
            <person name="Kurochkin I.V."/>
            <person name="Lareau L.F."/>
            <person name="Lazarevic D."/>
            <person name="Lipovich L."/>
            <person name="Liu J."/>
            <person name="Liuni S."/>
            <person name="McWilliam S."/>
            <person name="Madan Babu M."/>
            <person name="Madera M."/>
            <person name="Marchionni L."/>
            <person name="Matsuda H."/>
            <person name="Matsuzawa S."/>
            <person name="Miki H."/>
            <person name="Mignone F."/>
            <person name="Miyake S."/>
            <person name="Morris K."/>
            <person name="Mottagui-Tabar S."/>
            <person name="Mulder N."/>
            <person name="Nakano N."/>
            <person name="Nakauchi H."/>
            <person name="Ng P."/>
            <person name="Nilsson R."/>
            <person name="Nishiguchi S."/>
            <person name="Nishikawa S."/>
            <person name="Nori F."/>
            <person name="Ohara O."/>
            <person name="Okazaki Y."/>
            <person name="Orlando V."/>
            <person name="Pang K.C."/>
            <person name="Pavan W.J."/>
            <person name="Pavesi G."/>
            <person name="Pesole G."/>
            <person name="Petrovsky N."/>
            <person name="Piazza S."/>
            <person name="Reed J."/>
            <person name="Reid J.F."/>
            <person name="Ring B.Z."/>
            <person name="Ringwald M."/>
            <person name="Rost B."/>
            <person name="Ruan Y."/>
            <person name="Salzberg S.L."/>
            <person name="Sandelin A."/>
            <person name="Schneider C."/>
            <person name="Schoenbach C."/>
            <person name="Sekiguchi K."/>
            <person name="Semple C.A."/>
            <person name="Seno S."/>
            <person name="Sessa L."/>
            <person name="Sheng Y."/>
            <person name="Shibata Y."/>
            <person name="Shimada H."/>
            <person name="Shimada K."/>
            <person name="Silva D."/>
            <person name="Sinclair B."/>
            <person name="Sperling S."/>
            <person name="Stupka E."/>
            <person name="Sugiura K."/>
            <person name="Sultana R."/>
            <person name="Takenaka Y."/>
            <person name="Taki K."/>
            <person name="Tammoja K."/>
            <person name="Tan S.L."/>
            <person name="Tang S."/>
            <person name="Taylor M.S."/>
            <person name="Tegner J."/>
            <person name="Teichmann S.A."/>
            <person name="Ueda H.R."/>
            <person name="van Nimwegen E."/>
            <person name="Verardo R."/>
            <person name="Wei C.L."/>
            <person name="Yagi K."/>
            <person name="Yamanishi H."/>
            <person name="Zabarovsky E."/>
            <person name="Zhu S."/>
            <person name="Zimmer A."/>
            <person name="Hide W."/>
            <person name="Bult C."/>
            <person name="Grimmond S.M."/>
            <person name="Teasdale R.D."/>
            <person name="Liu E.T."/>
            <person name="Brusic V."/>
            <person name="Quackenbush J."/>
            <person name="Wahlestedt C."/>
            <person name="Mattick J.S."/>
            <person name="Hume D.A."/>
            <person name="Kai C."/>
            <person name="Sasaki D."/>
            <person name="Tomaru Y."/>
            <person name="Fukuda S."/>
            <person name="Kanamori-Katayama M."/>
            <person name="Suzuki M."/>
            <person name="Aoki J."/>
            <person name="Arakawa T."/>
            <person name="Iida J."/>
            <person name="Imamura K."/>
            <person name="Itoh M."/>
            <person name="Kato T."/>
            <person name="Kawaji H."/>
            <person name="Kawagashira N."/>
            <person name="Kawashima T."/>
            <person name="Kojima M."/>
            <person name="Kondo S."/>
            <person name="Konno H."/>
            <person name="Nakano K."/>
            <person name="Ninomiya N."/>
            <person name="Nishio T."/>
            <person name="Okada M."/>
            <person name="Plessy C."/>
            <person name="Shibata K."/>
            <person name="Shiraki T."/>
            <person name="Suzuki S."/>
            <person name="Tagami M."/>
            <person name="Waki K."/>
            <person name="Watahiki A."/>
            <person name="Okamura-Oho Y."/>
            <person name="Suzuki H."/>
            <person name="Kawai J."/>
            <person name="Hayashizaki Y."/>
        </authorList>
    </citation>
    <scope>NUCLEOTIDE SEQUENCE [LARGE SCALE MRNA] (ISOFORM 2)</scope>
    <source>
        <strain>C57BL/6J</strain>
        <tissue>Cerebellum</tissue>
    </source>
</reference>
<reference evidence="8" key="4">
    <citation type="submission" date="1998-06" db="EMBL/GenBank/DDBJ databases">
        <title>Identification of LYST2, a brain-specific member of the Chediak-Higashi syndrome gene family.</title>
        <authorList>
            <person name="Tchernev V.T."/>
            <person name="McMurtrie E.B."/>
            <person name="Nguyen Q.A."/>
            <person name="Mishra V.S."/>
            <person name="Barbosa M.D.F.S."/>
            <person name="McIndoe R."/>
            <person name="Kingsmore S.F."/>
        </authorList>
    </citation>
    <scope>NUCLEOTIDE SEQUENCE [MRNA] OF 2220-2936</scope>
</reference>
<reference key="5">
    <citation type="journal article" date="2010" name="Cell">
        <title>A tissue-specific atlas of mouse protein phosphorylation and expression.</title>
        <authorList>
            <person name="Huttlin E.L."/>
            <person name="Jedrychowski M.P."/>
            <person name="Elias J.E."/>
            <person name="Goswami T."/>
            <person name="Rad R."/>
            <person name="Beausoleil S.A."/>
            <person name="Villen J."/>
            <person name="Haas W."/>
            <person name="Sowa M.E."/>
            <person name="Gygi S.P."/>
        </authorList>
    </citation>
    <scope>PHOSPHORYLATION [LARGE SCALE ANALYSIS] AT SER-1001; SER-1004; SER-1519; SER-1704; SER-1707; SER-2128 AND SER-2565</scope>
    <scope>IDENTIFICATION BY MASS SPECTROMETRY [LARGE SCALE ANALYSIS]</scope>
    <source>
        <tissue>Brain</tissue>
        <tissue>Brown adipose tissue</tissue>
        <tissue>Heart</tissue>
        <tissue>Kidney</tissue>
        <tissue>Lung</tissue>
        <tissue>Pancreas</tissue>
        <tissue>Testis</tissue>
    </source>
</reference>
<feature type="chain" id="PRO_0000051090" description="Neurobeachin">
    <location>
        <begin position="1"/>
        <end position="2936"/>
    </location>
</feature>
<feature type="repeat" description="WD 1" evidence="8">
    <location>
        <begin position="1316"/>
        <end position="1358"/>
    </location>
</feature>
<feature type="domain" description="BEACH-type PH" evidence="2">
    <location>
        <begin position="2137"/>
        <end position="2245"/>
    </location>
</feature>
<feature type="domain" description="BEACH" evidence="1 8">
    <location>
        <begin position="2264"/>
        <end position="2553"/>
    </location>
</feature>
<feature type="repeat" description="WD 2" evidence="8">
    <location>
        <begin position="2708"/>
        <end position="2751"/>
    </location>
</feature>
<feature type="repeat" description="WD 3" evidence="8">
    <location>
        <begin position="2768"/>
        <end position="2808"/>
    </location>
</feature>
<feature type="repeat" description="WD 4" evidence="8">
    <location>
        <begin position="2850"/>
        <end position="2889"/>
    </location>
</feature>
<feature type="repeat" description="WD 5" evidence="8">
    <location>
        <begin position="2892"/>
        <end position="2931"/>
    </location>
</feature>
<feature type="region of interest" description="Disordered" evidence="3">
    <location>
        <begin position="961"/>
        <end position="985"/>
    </location>
</feature>
<feature type="region of interest" description="Disordered" evidence="3">
    <location>
        <begin position="1203"/>
        <end position="1222"/>
    </location>
</feature>
<feature type="region of interest" description="Disordered" evidence="3">
    <location>
        <begin position="1231"/>
        <end position="1265"/>
    </location>
</feature>
<feature type="region of interest" description="Disordered" evidence="3">
    <location>
        <begin position="1270"/>
        <end position="1289"/>
    </location>
</feature>
<feature type="region of interest" description="Disordered" evidence="3">
    <location>
        <begin position="1480"/>
        <end position="1521"/>
    </location>
</feature>
<feature type="region of interest" description="Disordered" evidence="3">
    <location>
        <begin position="1639"/>
        <end position="1667"/>
    </location>
</feature>
<feature type="region of interest" description="Disordered" evidence="3">
    <location>
        <begin position="1701"/>
        <end position="1721"/>
    </location>
</feature>
<feature type="region of interest" description="Disordered" evidence="3">
    <location>
        <begin position="1830"/>
        <end position="1850"/>
    </location>
</feature>
<feature type="compositionally biased region" description="Polar residues" evidence="3">
    <location>
        <begin position="970"/>
        <end position="982"/>
    </location>
</feature>
<feature type="compositionally biased region" description="Polar residues" evidence="3">
    <location>
        <begin position="1203"/>
        <end position="1220"/>
    </location>
</feature>
<feature type="compositionally biased region" description="Polar residues" evidence="3">
    <location>
        <begin position="1231"/>
        <end position="1241"/>
    </location>
</feature>
<feature type="compositionally biased region" description="Basic and acidic residues" evidence="3">
    <location>
        <begin position="1253"/>
        <end position="1265"/>
    </location>
</feature>
<feature type="compositionally biased region" description="Polar residues" evidence="3">
    <location>
        <begin position="1270"/>
        <end position="1286"/>
    </location>
</feature>
<feature type="compositionally biased region" description="Basic and acidic residues" evidence="3">
    <location>
        <begin position="1701"/>
        <end position="1714"/>
    </location>
</feature>
<feature type="compositionally biased region" description="Low complexity" evidence="3">
    <location>
        <begin position="1835"/>
        <end position="1845"/>
    </location>
</feature>
<feature type="modified residue" description="Phosphoserine" evidence="10">
    <location>
        <position position="1001"/>
    </location>
</feature>
<feature type="modified residue" description="Phosphoserine" evidence="10">
    <location>
        <position position="1004"/>
    </location>
</feature>
<feature type="modified residue" description="Phosphoserine" evidence="10">
    <location>
        <position position="1519"/>
    </location>
</feature>
<feature type="modified residue" description="Phosphoserine" evidence="10">
    <location>
        <position position="1704"/>
    </location>
</feature>
<feature type="modified residue" description="Phosphoserine" evidence="10">
    <location>
        <position position="1707"/>
    </location>
</feature>
<feature type="modified residue" description="Phosphoserine" evidence="10">
    <location>
        <position position="2128"/>
    </location>
</feature>
<feature type="modified residue" description="Phosphoserine" evidence="10">
    <location>
        <position position="2565"/>
    </location>
</feature>
<feature type="splice variant" id="VSP_050540" description="In isoform 2." evidence="7">
    <location>
        <begin position="1"/>
        <end position="2197"/>
    </location>
</feature>
<feature type="splice variant" id="VSP_050541" description="In isoform 3." evidence="6">
    <location>
        <begin position="1601"/>
        <end position="1632"/>
    </location>
</feature>
<feature type="splice variant" id="VSP_050542" description="In isoform 4." evidence="6">
    <location>
        <begin position="2560"/>
        <end position="2564"/>
    </location>
</feature>
<feature type="sequence conflict" description="In Ref. 2." evidence="8" ref="2">
    <original>FM</original>
    <variation>SR</variation>
    <location>
        <begin position="2220"/>
        <end position="2221"/>
    </location>
</feature>
<feature type="sequence conflict" description="In Ref. 2; AAD41634." evidence="8" ref="2">
    <original>D</original>
    <variation>H</variation>
    <location>
        <position position="2332"/>
    </location>
</feature>
<feature type="sequence conflict" description="In Ref. 2; AAD41634." evidence="8" ref="2">
    <original>I</original>
    <variation>K</variation>
    <location>
        <position position="2337"/>
    </location>
</feature>
<feature type="sequence conflict" description="In Ref. 2; AAD41634." evidence="8" ref="2">
    <original>A</original>
    <variation>P</variation>
    <location>
        <position position="2375"/>
    </location>
</feature>
<feature type="sequence conflict" description="In Ref. 2; AAD41634." evidence="8" ref="2">
    <original>L</original>
    <variation>V</variation>
    <location>
        <position position="2431"/>
    </location>
</feature>
<feature type="sequence conflict" description="In Ref. 2; AAD41634." evidence="8" ref="2">
    <original>E</original>
    <variation>V</variation>
    <location>
        <position position="2532"/>
    </location>
</feature>
<feature type="sequence conflict" description="In Ref. 2; AAD41634." evidence="8" ref="2">
    <original>G</original>
    <variation>A</variation>
    <location>
        <position position="2539"/>
    </location>
</feature>
<feature type="sequence conflict" description="In Ref. 2; AAD41634." evidence="8" ref="2">
    <original>S</original>
    <variation>T</variation>
    <location>
        <position position="2554"/>
    </location>
</feature>
<feature type="sequence conflict" description="In Ref. 2; AAD41634." evidence="8" ref="2">
    <original>F</original>
    <variation>S</variation>
    <location>
        <position position="2561"/>
    </location>
</feature>
<feature type="sequence conflict" description="In Ref. 2; AAD41634." evidence="8" ref="2">
    <original>D</original>
    <variation>N</variation>
    <location>
        <position position="2802"/>
    </location>
</feature>
<feature type="sequence conflict" description="In Ref. 2; AAD41634." evidence="8" ref="2">
    <original>R</original>
    <variation>K</variation>
    <location>
        <position position="2805"/>
    </location>
</feature>
<feature type="sequence conflict" description="In Ref. 2; AAD41634." evidence="8" ref="2">
    <original>AFNIDFNRWHYEHQNRY</original>
    <variation>LLI</variation>
    <location>
        <begin position="2920"/>
        <end position="2936"/>
    </location>
</feature>
<protein>
    <recommendedName>
        <fullName>Neurobeachin</fullName>
    </recommendedName>
    <alternativeName>
        <fullName>Lysosomal-trafficking regulator 2</fullName>
    </alternativeName>
</protein>
<proteinExistence type="evidence at protein level"/>
<evidence type="ECO:0000255" key="1">
    <source>
        <dbReference type="PROSITE-ProRule" id="PRU00026"/>
    </source>
</evidence>
<evidence type="ECO:0000255" key="2">
    <source>
        <dbReference type="PROSITE-ProRule" id="PRU01119"/>
    </source>
</evidence>
<evidence type="ECO:0000256" key="3">
    <source>
        <dbReference type="SAM" id="MobiDB-lite"/>
    </source>
</evidence>
<evidence type="ECO:0000269" key="4">
    <source>
    </source>
</evidence>
<evidence type="ECO:0000269" key="5">
    <source>
    </source>
</evidence>
<evidence type="ECO:0000303" key="6">
    <source>
    </source>
</evidence>
<evidence type="ECO:0000303" key="7">
    <source>
    </source>
</evidence>
<evidence type="ECO:0000305" key="8"/>
<evidence type="ECO:0000312" key="9">
    <source>
        <dbReference type="EMBL" id="CAC18811.1"/>
    </source>
</evidence>
<evidence type="ECO:0007744" key="10">
    <source>
    </source>
</evidence>